<proteinExistence type="inferred from homology"/>
<protein>
    <recommendedName>
        <fullName>Amino-acid acetyltransferase, mitochondrial</fullName>
        <ecNumber>2.3.1.1</ecNumber>
    </recommendedName>
    <alternativeName>
        <fullName>Arginine-requiring protein 2</fullName>
    </alternativeName>
    <alternativeName>
        <fullName>Glutamate N-acetyltransferase</fullName>
    </alternativeName>
    <alternativeName>
        <fullName>N-acetylglutamate synthase</fullName>
        <shortName>AGS</shortName>
        <shortName>NAGS</shortName>
    </alternativeName>
</protein>
<name>NAGS_LODEL</name>
<sequence>MSKIRTLNRQFISNLETHKAVTDAKRNLILSILKSTTTKREAKNYLTKYQNQFDLPDETPKAGTIYEQSLSRRDNQRELFIKRFLNAQNPFISIYDDEETKLQKIPLRLAIFKIKFPTISLRQWKGIAETFKRLMTLGISPIILLDYDHLSHGSFKKNELYMINQANKMLSILGKPEEQEDLKATILRNSFSVADGQITIDSLELILIPLYQGIIPIIQPIVFNADTTMQEFLKCNTLLNSLCTALVDRRTTDLLSIEKIVMIDPLGGIPSIERKQTSHVFINLSQEYSDIMSELFIGHISPKIRDLHVENLNSMNEILTSIFEKSGNDETTGIITTPEVMSIHNDQLNPIIYNVLTDRSIISSSLPSTNKRTPQLSTTIVKKGVDVQIFDQENNFSGSDFTMDNLIASKKVDKKKLTELLEDSFGKKLIVDEYYERINNRLATFILVGDYDGAAIITWEYSGDKKVAYLDKFAIAKRNQGLPGLADIIFKIILQSHPVELIWRSRKNNPVNKWYFERCCGCMSAPESQWKIFYTGDIFDKRIDRMKDKKKQNNKKKKTATMMMMNNSQKVAGVNADTHVDILKNLEQYSDICEGIVPSFA</sequence>
<reference key="1">
    <citation type="journal article" date="2009" name="Nature">
        <title>Evolution of pathogenicity and sexual reproduction in eight Candida genomes.</title>
        <authorList>
            <person name="Butler G."/>
            <person name="Rasmussen M.D."/>
            <person name="Lin M.F."/>
            <person name="Santos M.A.S."/>
            <person name="Sakthikumar S."/>
            <person name="Munro C.A."/>
            <person name="Rheinbay E."/>
            <person name="Grabherr M."/>
            <person name="Forche A."/>
            <person name="Reedy J.L."/>
            <person name="Agrafioti I."/>
            <person name="Arnaud M.B."/>
            <person name="Bates S."/>
            <person name="Brown A.J.P."/>
            <person name="Brunke S."/>
            <person name="Costanzo M.C."/>
            <person name="Fitzpatrick D.A."/>
            <person name="de Groot P.W.J."/>
            <person name="Harris D."/>
            <person name="Hoyer L.L."/>
            <person name="Hube B."/>
            <person name="Klis F.M."/>
            <person name="Kodira C."/>
            <person name="Lennard N."/>
            <person name="Logue M.E."/>
            <person name="Martin R."/>
            <person name="Neiman A.M."/>
            <person name="Nikolaou E."/>
            <person name="Quail M.A."/>
            <person name="Quinn J."/>
            <person name="Santos M.C."/>
            <person name="Schmitzberger F.F."/>
            <person name="Sherlock G."/>
            <person name="Shah P."/>
            <person name="Silverstein K.A.T."/>
            <person name="Skrzypek M.S."/>
            <person name="Soll D."/>
            <person name="Staggs R."/>
            <person name="Stansfield I."/>
            <person name="Stumpf M.P.H."/>
            <person name="Sudbery P.E."/>
            <person name="Srikantha T."/>
            <person name="Zeng Q."/>
            <person name="Berman J."/>
            <person name="Berriman M."/>
            <person name="Heitman J."/>
            <person name="Gow N.A.R."/>
            <person name="Lorenz M.C."/>
            <person name="Birren B.W."/>
            <person name="Kellis M."/>
            <person name="Cuomo C.A."/>
        </authorList>
    </citation>
    <scope>NUCLEOTIDE SEQUENCE [LARGE SCALE GENOMIC DNA]</scope>
    <source>
        <strain>ATCC 11503 / BCRC 21390 / CBS 2605 / JCM 1781 / NBRC 1676 / NRRL YB-4239</strain>
    </source>
</reference>
<feature type="transit peptide" description="Mitochondrion" evidence="2">
    <location>
        <begin position="1"/>
        <end status="unknown"/>
    </location>
</feature>
<feature type="chain" id="PRO_0000372566" description="Amino-acid acetyltransferase, mitochondrial">
    <location>
        <begin status="unknown"/>
        <end position="601"/>
    </location>
</feature>
<feature type="domain" description="N-acetyltransferase" evidence="3">
    <location>
        <begin position="401"/>
        <end position="558"/>
    </location>
</feature>
<organism>
    <name type="scientific">Lodderomyces elongisporus (strain ATCC 11503 / CBS 2605 / JCM 1781 / NBRC 1676 / NRRL YB-4239)</name>
    <name type="common">Yeast</name>
    <name type="synonym">Saccharomyces elongisporus</name>
    <dbReference type="NCBI Taxonomy" id="379508"/>
    <lineage>
        <taxon>Eukaryota</taxon>
        <taxon>Fungi</taxon>
        <taxon>Dikarya</taxon>
        <taxon>Ascomycota</taxon>
        <taxon>Saccharomycotina</taxon>
        <taxon>Pichiomycetes</taxon>
        <taxon>Debaryomycetaceae</taxon>
        <taxon>Candida/Lodderomyces clade</taxon>
        <taxon>Lodderomyces</taxon>
    </lineage>
</organism>
<accession>A5DWN5</accession>
<keyword id="KW-0012">Acyltransferase</keyword>
<keyword id="KW-0028">Amino-acid biosynthesis</keyword>
<keyword id="KW-0496">Mitochondrion</keyword>
<keyword id="KW-1185">Reference proteome</keyword>
<keyword id="KW-0808">Transferase</keyword>
<keyword id="KW-0809">Transit peptide</keyword>
<evidence type="ECO:0000250" key="1"/>
<evidence type="ECO:0000255" key="2"/>
<evidence type="ECO:0000255" key="3">
    <source>
        <dbReference type="PROSITE-ProRule" id="PRU00532"/>
    </source>
</evidence>
<evidence type="ECO:0000305" key="4"/>
<dbReference type="EC" id="2.3.1.1"/>
<dbReference type="EMBL" id="CH981525">
    <property type="protein sequence ID" value="EDK43593.1"/>
    <property type="molecule type" value="Genomic_DNA"/>
</dbReference>
<dbReference type="RefSeq" id="XP_001526943.1">
    <property type="nucleotide sequence ID" value="XM_001526893.1"/>
</dbReference>
<dbReference type="FunCoup" id="A5DWN5">
    <property type="interactions" value="105"/>
</dbReference>
<dbReference type="STRING" id="379508.A5DWN5"/>
<dbReference type="GeneID" id="5233951"/>
<dbReference type="KEGG" id="lel:PVL30_001748"/>
<dbReference type="VEuPathDB" id="FungiDB:LELG_01772"/>
<dbReference type="eggNOG" id="KOG2436">
    <property type="taxonomic scope" value="Eukaryota"/>
</dbReference>
<dbReference type="HOGENOM" id="CLU_013088_0_0_1"/>
<dbReference type="InParanoid" id="A5DWN5"/>
<dbReference type="OMA" id="NAMVRDC"/>
<dbReference type="OrthoDB" id="5585968at2759"/>
<dbReference type="UniPathway" id="UPA00068">
    <property type="reaction ID" value="UER00106"/>
</dbReference>
<dbReference type="Proteomes" id="UP000001996">
    <property type="component" value="Unassembled WGS sequence"/>
</dbReference>
<dbReference type="GO" id="GO:0005759">
    <property type="term" value="C:mitochondrial matrix"/>
    <property type="evidence" value="ECO:0007669"/>
    <property type="project" value="TreeGrafter"/>
</dbReference>
<dbReference type="GO" id="GO:0004042">
    <property type="term" value="F:L-glutamate N-acetyltransferase activity"/>
    <property type="evidence" value="ECO:0007669"/>
    <property type="project" value="InterPro"/>
</dbReference>
<dbReference type="GO" id="GO:0006526">
    <property type="term" value="P:L-arginine biosynthetic process"/>
    <property type="evidence" value="ECO:0007669"/>
    <property type="project" value="UniProtKB-UniPathway"/>
</dbReference>
<dbReference type="GO" id="GO:0006592">
    <property type="term" value="P:ornithine biosynthetic process"/>
    <property type="evidence" value="ECO:0007669"/>
    <property type="project" value="TreeGrafter"/>
</dbReference>
<dbReference type="Gene3D" id="3.40.630.30">
    <property type="match status" value="1"/>
</dbReference>
<dbReference type="InterPro" id="IPR011190">
    <property type="entry name" value="GlcNAc_Synth_fun"/>
</dbReference>
<dbReference type="InterPro" id="IPR006855">
    <property type="entry name" value="Vertebrate-like_GNAT_dom"/>
</dbReference>
<dbReference type="PANTHER" id="PTHR23342:SF4">
    <property type="entry name" value="AMINO-ACID ACETYLTRANSFERASE, MITOCHONDRIAL"/>
    <property type="match status" value="1"/>
</dbReference>
<dbReference type="PANTHER" id="PTHR23342">
    <property type="entry name" value="N-ACETYLGLUTAMATE SYNTHASE"/>
    <property type="match status" value="1"/>
</dbReference>
<dbReference type="Pfam" id="PF04768">
    <property type="entry name" value="NAT"/>
    <property type="match status" value="1"/>
</dbReference>
<dbReference type="PIRSF" id="PIRSF007892">
    <property type="entry name" value="NAGS_fungal"/>
    <property type="match status" value="1"/>
</dbReference>
<dbReference type="PROSITE" id="PS51731">
    <property type="entry name" value="GNAT_NAGS"/>
    <property type="match status" value="1"/>
</dbReference>
<gene>
    <name type="primary">ARG2</name>
    <name type="ORF">LELG_01772</name>
</gene>
<comment type="function">
    <text evidence="1">N-acetylglutamate synthase involved in arginine biosynthesis.</text>
</comment>
<comment type="catalytic activity">
    <reaction>
        <text>L-glutamate + acetyl-CoA = N-acetyl-L-glutamate + CoA + H(+)</text>
        <dbReference type="Rhea" id="RHEA:24292"/>
        <dbReference type="ChEBI" id="CHEBI:15378"/>
        <dbReference type="ChEBI" id="CHEBI:29985"/>
        <dbReference type="ChEBI" id="CHEBI:44337"/>
        <dbReference type="ChEBI" id="CHEBI:57287"/>
        <dbReference type="ChEBI" id="CHEBI:57288"/>
        <dbReference type="EC" id="2.3.1.1"/>
    </reaction>
</comment>
<comment type="pathway">
    <text>Amino-acid biosynthesis; L-arginine biosynthesis; N(2)-acetyl-L-ornithine from L-glutamate: step 1/4.</text>
</comment>
<comment type="subcellular location">
    <subcellularLocation>
        <location evidence="1">Mitochondrion</location>
    </subcellularLocation>
</comment>
<comment type="similarity">
    <text evidence="4">Belongs to the acetyltransferase family.</text>
</comment>